<accession>B8DB24</accession>
<protein>
    <recommendedName>
        <fullName evidence="1">Large ribosomal subunit protein uL18</fullName>
    </recommendedName>
    <alternativeName>
        <fullName evidence="3">50S ribosomal protein L18</fullName>
    </alternativeName>
</protein>
<gene>
    <name evidence="1" type="primary">rplR</name>
    <name type="ordered locus">LMHCC_2918</name>
</gene>
<feature type="chain" id="PRO_1000166236" description="Large ribosomal subunit protein uL18">
    <location>
        <begin position="1"/>
        <end position="119"/>
    </location>
</feature>
<feature type="region of interest" description="Disordered" evidence="2">
    <location>
        <begin position="1"/>
        <end position="25"/>
    </location>
</feature>
<feature type="compositionally biased region" description="Basic residues" evidence="2">
    <location>
        <begin position="9"/>
        <end position="20"/>
    </location>
</feature>
<keyword id="KW-0687">Ribonucleoprotein</keyword>
<keyword id="KW-0689">Ribosomal protein</keyword>
<keyword id="KW-0694">RNA-binding</keyword>
<keyword id="KW-0699">rRNA-binding</keyword>
<comment type="function">
    <text evidence="1">This is one of the proteins that bind and probably mediate the attachment of the 5S RNA into the large ribosomal subunit, where it forms part of the central protuberance.</text>
</comment>
<comment type="subunit">
    <text evidence="1">Part of the 50S ribosomal subunit; part of the 5S rRNA/L5/L18/L25 subcomplex. Contacts the 5S and 23S rRNAs.</text>
</comment>
<comment type="similarity">
    <text evidence="1">Belongs to the universal ribosomal protein uL18 family.</text>
</comment>
<evidence type="ECO:0000255" key="1">
    <source>
        <dbReference type="HAMAP-Rule" id="MF_01337"/>
    </source>
</evidence>
<evidence type="ECO:0000256" key="2">
    <source>
        <dbReference type="SAM" id="MobiDB-lite"/>
    </source>
</evidence>
<evidence type="ECO:0000305" key="3"/>
<name>RL18_LISMH</name>
<sequence length="119" mass="13096">MITKIDKNKVRKKRHARVRSKISGTESRPRLNVFRSNKNIYAQIIDDVNGVTLASASNLDKDFGSAESKVDAASKVGELVAKRASEKGITSVTFDRGGYLYHGRVKALAEAARENGLEF</sequence>
<reference key="1">
    <citation type="journal article" date="2011" name="J. Bacteriol.">
        <title>Genome sequence of lineage III Listeria monocytogenes strain HCC23.</title>
        <authorList>
            <person name="Steele C.L."/>
            <person name="Donaldson J.R."/>
            <person name="Paul D."/>
            <person name="Banes M.M."/>
            <person name="Arick T."/>
            <person name="Bridges S.M."/>
            <person name="Lawrence M.L."/>
        </authorList>
    </citation>
    <scope>NUCLEOTIDE SEQUENCE [LARGE SCALE GENOMIC DNA]</scope>
    <source>
        <strain>HCC23</strain>
    </source>
</reference>
<organism>
    <name type="scientific">Listeria monocytogenes serotype 4a (strain HCC23)</name>
    <dbReference type="NCBI Taxonomy" id="552536"/>
    <lineage>
        <taxon>Bacteria</taxon>
        <taxon>Bacillati</taxon>
        <taxon>Bacillota</taxon>
        <taxon>Bacilli</taxon>
        <taxon>Bacillales</taxon>
        <taxon>Listeriaceae</taxon>
        <taxon>Listeria</taxon>
    </lineage>
</organism>
<dbReference type="EMBL" id="CP001175">
    <property type="protein sequence ID" value="ACK41249.1"/>
    <property type="molecule type" value="Genomic_DNA"/>
</dbReference>
<dbReference type="RefSeq" id="WP_003739848.1">
    <property type="nucleotide sequence ID" value="NC_011660.1"/>
</dbReference>
<dbReference type="SMR" id="B8DB24"/>
<dbReference type="GeneID" id="93240497"/>
<dbReference type="KEGG" id="lmh:LMHCC_2918"/>
<dbReference type="HOGENOM" id="CLU_098841_0_1_9"/>
<dbReference type="GO" id="GO:0022625">
    <property type="term" value="C:cytosolic large ribosomal subunit"/>
    <property type="evidence" value="ECO:0007669"/>
    <property type="project" value="TreeGrafter"/>
</dbReference>
<dbReference type="GO" id="GO:0008097">
    <property type="term" value="F:5S rRNA binding"/>
    <property type="evidence" value="ECO:0007669"/>
    <property type="project" value="TreeGrafter"/>
</dbReference>
<dbReference type="GO" id="GO:0003735">
    <property type="term" value="F:structural constituent of ribosome"/>
    <property type="evidence" value="ECO:0007669"/>
    <property type="project" value="InterPro"/>
</dbReference>
<dbReference type="GO" id="GO:0006412">
    <property type="term" value="P:translation"/>
    <property type="evidence" value="ECO:0007669"/>
    <property type="project" value="UniProtKB-UniRule"/>
</dbReference>
<dbReference type="CDD" id="cd00432">
    <property type="entry name" value="Ribosomal_L18_L5e"/>
    <property type="match status" value="1"/>
</dbReference>
<dbReference type="FunFam" id="3.30.420.100:FF:000001">
    <property type="entry name" value="50S ribosomal protein L18"/>
    <property type="match status" value="1"/>
</dbReference>
<dbReference type="Gene3D" id="3.30.420.100">
    <property type="match status" value="1"/>
</dbReference>
<dbReference type="HAMAP" id="MF_01337_B">
    <property type="entry name" value="Ribosomal_uL18_B"/>
    <property type="match status" value="1"/>
</dbReference>
<dbReference type="InterPro" id="IPR004389">
    <property type="entry name" value="Ribosomal_uL18_bac-type"/>
</dbReference>
<dbReference type="InterPro" id="IPR005484">
    <property type="entry name" value="Ribosomal_uL18_bac/euk"/>
</dbReference>
<dbReference type="NCBIfam" id="TIGR00060">
    <property type="entry name" value="L18_bact"/>
    <property type="match status" value="1"/>
</dbReference>
<dbReference type="PANTHER" id="PTHR12899">
    <property type="entry name" value="39S RIBOSOMAL PROTEIN L18, MITOCHONDRIAL"/>
    <property type="match status" value="1"/>
</dbReference>
<dbReference type="PANTHER" id="PTHR12899:SF3">
    <property type="entry name" value="LARGE RIBOSOMAL SUBUNIT PROTEIN UL18M"/>
    <property type="match status" value="1"/>
</dbReference>
<dbReference type="Pfam" id="PF00861">
    <property type="entry name" value="Ribosomal_L18p"/>
    <property type="match status" value="1"/>
</dbReference>
<dbReference type="SUPFAM" id="SSF53137">
    <property type="entry name" value="Translational machinery components"/>
    <property type="match status" value="1"/>
</dbReference>
<proteinExistence type="inferred from homology"/>